<gene>
    <name type="primary">pnut</name>
    <name type="ORF">CG8705</name>
</gene>
<feature type="chain" id="PRO_0000173510" description="Protein peanut">
    <location>
        <begin position="1"/>
        <end position="539"/>
    </location>
</feature>
<feature type="domain" description="Septin-type G" evidence="3">
    <location>
        <begin position="139"/>
        <end position="411"/>
    </location>
</feature>
<feature type="region of interest" description="Disordered" evidence="4">
    <location>
        <begin position="29"/>
        <end position="90"/>
    </location>
</feature>
<feature type="region of interest" description="G1 motif" evidence="3">
    <location>
        <begin position="149"/>
        <end position="156"/>
    </location>
</feature>
<feature type="region of interest" description="G3 motif" evidence="3">
    <location>
        <begin position="206"/>
        <end position="209"/>
    </location>
</feature>
<feature type="region of interest" description="G4 motif" evidence="3">
    <location>
        <begin position="287"/>
        <end position="290"/>
    </location>
</feature>
<feature type="region of interest" description="Disordered" evidence="4">
    <location>
        <begin position="513"/>
        <end position="539"/>
    </location>
</feature>
<feature type="coiled-coil region" evidence="2">
    <location>
        <begin position="420"/>
        <end position="516"/>
    </location>
</feature>
<feature type="compositionally biased region" description="Low complexity" evidence="4">
    <location>
        <begin position="35"/>
        <end position="54"/>
    </location>
</feature>
<feature type="binding site" evidence="1">
    <location>
        <begin position="149"/>
        <end position="156"/>
    </location>
    <ligand>
        <name>GTP</name>
        <dbReference type="ChEBI" id="CHEBI:37565"/>
    </ligand>
</feature>
<feature type="binding site" evidence="1">
    <location>
        <position position="183"/>
    </location>
    <ligand>
        <name>GTP</name>
        <dbReference type="ChEBI" id="CHEBI:37565"/>
    </ligand>
</feature>
<feature type="binding site" evidence="1">
    <location>
        <position position="209"/>
    </location>
    <ligand>
        <name>GTP</name>
        <dbReference type="ChEBI" id="CHEBI:37565"/>
    </ligand>
</feature>
<feature type="binding site" evidence="1">
    <location>
        <begin position="288"/>
        <end position="296"/>
    </location>
    <ligand>
        <name>GTP</name>
        <dbReference type="ChEBI" id="CHEBI:37565"/>
    </ligand>
</feature>
<feature type="binding site" evidence="1">
    <location>
        <position position="345"/>
    </location>
    <ligand>
        <name>GTP</name>
        <dbReference type="ChEBI" id="CHEBI:37565"/>
    </ligand>
</feature>
<feature type="binding site" evidence="1">
    <location>
        <position position="360"/>
    </location>
    <ligand>
        <name>GTP</name>
        <dbReference type="ChEBI" id="CHEBI:37565"/>
    </ligand>
</feature>
<feature type="modified residue" description="Phosphoserine" evidence="6">
    <location>
        <position position="6"/>
    </location>
</feature>
<feature type="modified residue" description="Phosphoserine" evidence="6">
    <location>
        <position position="13"/>
    </location>
</feature>
<feature type="modified residue" description="Phosphoserine" evidence="8">
    <location>
        <position position="517"/>
    </location>
</feature>
<feature type="sequence conflict" description="In Ref. 1; AAA19603." evidence="11" ref="1">
    <original>G</original>
    <variation>S</variation>
    <location>
        <position position="79"/>
    </location>
</feature>
<feature type="sequence conflict" description="In Ref. 1; AAA19603." evidence="11" ref="1">
    <original>S</original>
    <variation>N</variation>
    <location>
        <position position="249"/>
    </location>
</feature>
<proteinExistence type="evidence at protein level"/>
<sequence>MNSPRSNAVNGGSGGAISALPSTLAQLALRDKQQAASASASSATNGSSGSESLVGVGGRPPNQPPSVPVAASGKLDTSGGGASNGDSNKLTHDLQEKEHQQAQKPQKPPLPVRQKPMEIAGYVGFANLPNQVYRKAVKRGFEFTLMVVGASGLGKSTLINSMFLSDIYNAEQYPGPSLRKKKTVAVEATKVMLKENGVNLTLTVVDTPGFGDAVDNSNCWVPILEYVDSKYEEYLTAESRVYRKTISDSRVHCCLYFIAPSGHGLLPLDIACMQSLSDKVNLVPVIAKADTMTPDEVHLFKKQILNEIAQHKIKIYDFPATLEDAAEEAKTTQNLRSRVPFAVVGANTIIEQDGKKVRGRRYPWGLVEVENLTHCDFIALRNMVIRTHLQDLKDVTNNVHYENYRCRKLSELGLVDGKARLSNKNPLTQMEEEKREHEQKMKKMEAEMEQVFDMKVKEKMQKLRDSELELARRHEERKKALELQIRELEEKRREFEREKKEWEDVNHVTLEELKRRSLGANSSTDNVDGKKEKKKKGLF</sequence>
<comment type="function">
    <text evidence="7 9">Involved in cytokinesis and possibly cellularization (PubMed:8181057). Also acts as an enhancer of the sina gene, thus having a role in photoreceptor development (PubMed:8181057). May be involved in p53-dependent apoptosis (PubMed:17456438).</text>
</comment>
<comment type="subunit">
    <text evidence="5 7 10">Likely part of a multicomponent septin complex that includes Septin1 (PubMed:8590810). Interacts with Septin1 (PubMed:8590810). Interacts with hil (PubMed:15818553). Interacts with park (PubMed:17456438).</text>
</comment>
<comment type="subcellular location">
    <subcellularLocation>
        <location evidence="9">Apical cell membrane</location>
        <topology evidence="9">Peripheral membrane protein</topology>
    </subcellularLocation>
    <subcellularLocation>
        <location evidence="9">Cleavage furrow</location>
    </subcellularLocation>
    <subcellularLocation>
        <location evidence="5">Cytoplasm</location>
        <location evidence="5">Cell cortex</location>
    </subcellularLocation>
    <text evidence="5 9">Localized to the cleavage furrow of dividing cells during cytokinesis and to the intercellular bridge connecting postmitotic daughter cells. Equally found on the cell surfaces of the embryonic central nervous system and on the apical membranes of developing photoreceptor cells in the eye imaginal disk (PubMed:8181057). Colocalizes with hil at the cell cortex (PubMed:15818553).</text>
</comment>
<comment type="tissue specificity">
    <text evidence="10">Accumulates at the leading edge of the cleavage furrow in dividing cells and cellularizing embryos (at protein level).</text>
</comment>
<comment type="developmental stage">
    <text evidence="9">Maternal gene products found in the early embryo prior to zygotic transcription.</text>
</comment>
<comment type="PTM">
    <text evidence="7">Ubiquitinated by park, leading to its degradation by the proteasome.</text>
</comment>
<comment type="similarity">
    <text evidence="3">Belongs to the TRAFAC class TrmE-Era-EngA-EngB-Septin-like GTPase superfamily. Septin GTPase family.</text>
</comment>
<organism>
    <name type="scientific">Drosophila melanogaster</name>
    <name type="common">Fruit fly</name>
    <dbReference type="NCBI Taxonomy" id="7227"/>
    <lineage>
        <taxon>Eukaryota</taxon>
        <taxon>Metazoa</taxon>
        <taxon>Ecdysozoa</taxon>
        <taxon>Arthropoda</taxon>
        <taxon>Hexapoda</taxon>
        <taxon>Insecta</taxon>
        <taxon>Pterygota</taxon>
        <taxon>Neoptera</taxon>
        <taxon>Endopterygota</taxon>
        <taxon>Diptera</taxon>
        <taxon>Brachycera</taxon>
        <taxon>Muscomorpha</taxon>
        <taxon>Ephydroidea</taxon>
        <taxon>Drosophilidae</taxon>
        <taxon>Drosophila</taxon>
        <taxon>Sophophora</taxon>
    </lineage>
</organism>
<dbReference type="EMBL" id="U08103">
    <property type="protein sequence ID" value="AAA19603.1"/>
    <property type="molecule type" value="mRNA"/>
</dbReference>
<dbReference type="EMBL" id="AE013599">
    <property type="protein sequence ID" value="AAM68857.1"/>
    <property type="molecule type" value="Genomic_DNA"/>
</dbReference>
<dbReference type="EMBL" id="AY058663">
    <property type="protein sequence ID" value="AAL13892.1"/>
    <property type="molecule type" value="mRNA"/>
</dbReference>
<dbReference type="PIR" id="A54294">
    <property type="entry name" value="A54294"/>
</dbReference>
<dbReference type="RefSeq" id="NP_477064.1">
    <property type="nucleotide sequence ID" value="NM_057716.4"/>
</dbReference>
<dbReference type="RefSeq" id="NP_724659.1">
    <property type="nucleotide sequence ID" value="NM_165597.2"/>
</dbReference>
<dbReference type="SMR" id="P40797"/>
<dbReference type="BioGRID" id="61655">
    <property type="interactions" value="32"/>
</dbReference>
<dbReference type="DIP" id="DIP-60735N"/>
<dbReference type="FunCoup" id="P40797">
    <property type="interactions" value="1341"/>
</dbReference>
<dbReference type="IntAct" id="P40797">
    <property type="interactions" value="39"/>
</dbReference>
<dbReference type="STRING" id="7227.FBpp0087869"/>
<dbReference type="iPTMnet" id="P40797"/>
<dbReference type="PaxDb" id="7227-FBpp0087869"/>
<dbReference type="DNASU" id="35801"/>
<dbReference type="EnsemblMetazoa" id="FBtr0088792">
    <property type="protein sequence ID" value="FBpp0087869"/>
    <property type="gene ID" value="FBgn0013726"/>
</dbReference>
<dbReference type="EnsemblMetazoa" id="FBtr0088793">
    <property type="protein sequence ID" value="FBpp0087870"/>
    <property type="gene ID" value="FBgn0013726"/>
</dbReference>
<dbReference type="GeneID" id="35801"/>
<dbReference type="KEGG" id="dme:Dmel_CG8705"/>
<dbReference type="AGR" id="FB:FBgn0013726"/>
<dbReference type="CTD" id="35801"/>
<dbReference type="FlyBase" id="FBgn0013726">
    <property type="gene designation" value="pnut"/>
</dbReference>
<dbReference type="VEuPathDB" id="VectorBase:FBgn0013726"/>
<dbReference type="eggNOG" id="KOG2655">
    <property type="taxonomic scope" value="Eukaryota"/>
</dbReference>
<dbReference type="GeneTree" id="ENSGT00940000154222"/>
<dbReference type="HOGENOM" id="CLU_017718_8_1_1"/>
<dbReference type="InParanoid" id="P40797"/>
<dbReference type="OMA" id="RSNPMGS"/>
<dbReference type="OrthoDB" id="416553at2759"/>
<dbReference type="PhylomeDB" id="P40797"/>
<dbReference type="BioGRID-ORCS" id="35801">
    <property type="hits" value="0 hits in 1 CRISPR screen"/>
</dbReference>
<dbReference type="GenomeRNAi" id="35801"/>
<dbReference type="PRO" id="PR:P40797"/>
<dbReference type="Proteomes" id="UP000000803">
    <property type="component" value="Chromosome 2R"/>
</dbReference>
<dbReference type="Bgee" id="FBgn0013726">
    <property type="expression patterns" value="Expressed in wing disc and 181 other cell types or tissues"/>
</dbReference>
<dbReference type="GO" id="GO:0016324">
    <property type="term" value="C:apical plasma membrane"/>
    <property type="evidence" value="ECO:0007669"/>
    <property type="project" value="UniProtKB-SubCell"/>
</dbReference>
<dbReference type="GO" id="GO:0032153">
    <property type="term" value="C:cell division site"/>
    <property type="evidence" value="ECO:0000318"/>
    <property type="project" value="GO_Central"/>
</dbReference>
<dbReference type="GO" id="GO:0032154">
    <property type="term" value="C:cleavage furrow"/>
    <property type="evidence" value="ECO:0000314"/>
    <property type="project" value="FlyBase"/>
</dbReference>
<dbReference type="GO" id="GO:0070938">
    <property type="term" value="C:contractile ring"/>
    <property type="evidence" value="ECO:0000314"/>
    <property type="project" value="FlyBase"/>
</dbReference>
<dbReference type="GO" id="GO:0045171">
    <property type="term" value="C:intercellular bridge"/>
    <property type="evidence" value="ECO:0000314"/>
    <property type="project" value="FlyBase"/>
</dbReference>
<dbReference type="GO" id="GO:0015630">
    <property type="term" value="C:microtubule cytoskeleton"/>
    <property type="evidence" value="ECO:0000318"/>
    <property type="project" value="GO_Central"/>
</dbReference>
<dbReference type="GO" id="GO:0005886">
    <property type="term" value="C:plasma membrane"/>
    <property type="evidence" value="ECO:0000314"/>
    <property type="project" value="FlyBase"/>
</dbReference>
<dbReference type="GO" id="GO:0031105">
    <property type="term" value="C:septin complex"/>
    <property type="evidence" value="ECO:0000314"/>
    <property type="project" value="FlyBase"/>
</dbReference>
<dbReference type="GO" id="GO:0005940">
    <property type="term" value="C:septin ring"/>
    <property type="evidence" value="ECO:0000318"/>
    <property type="project" value="GO_Central"/>
</dbReference>
<dbReference type="GO" id="GO:0003779">
    <property type="term" value="F:actin binding"/>
    <property type="evidence" value="ECO:0000314"/>
    <property type="project" value="FlyBase"/>
</dbReference>
<dbReference type="GO" id="GO:0051015">
    <property type="term" value="F:actin filament binding"/>
    <property type="evidence" value="ECO:0000314"/>
    <property type="project" value="FlyBase"/>
</dbReference>
<dbReference type="GO" id="GO:0005525">
    <property type="term" value="F:GTP binding"/>
    <property type="evidence" value="ECO:0000314"/>
    <property type="project" value="FlyBase"/>
</dbReference>
<dbReference type="GO" id="GO:0003924">
    <property type="term" value="F:GTPase activity"/>
    <property type="evidence" value="ECO:0000314"/>
    <property type="project" value="FlyBase"/>
</dbReference>
<dbReference type="GO" id="GO:0008017">
    <property type="term" value="F:microtubule binding"/>
    <property type="evidence" value="ECO:0000314"/>
    <property type="project" value="FlyBase"/>
</dbReference>
<dbReference type="GO" id="GO:0060090">
    <property type="term" value="F:molecular adaptor activity"/>
    <property type="evidence" value="ECO:0000318"/>
    <property type="project" value="GO_Central"/>
</dbReference>
<dbReference type="GO" id="GO:0042803">
    <property type="term" value="F:protein homodimerization activity"/>
    <property type="evidence" value="ECO:0000314"/>
    <property type="project" value="FlyBase"/>
</dbReference>
<dbReference type="GO" id="GO:0031625">
    <property type="term" value="F:ubiquitin protein ligase binding"/>
    <property type="evidence" value="ECO:0000353"/>
    <property type="project" value="FlyBase"/>
</dbReference>
<dbReference type="GO" id="GO:0044837">
    <property type="term" value="P:actomyosin contractile ring organization"/>
    <property type="evidence" value="ECO:0000315"/>
    <property type="project" value="FlyBase"/>
</dbReference>
<dbReference type="GO" id="GO:0006915">
    <property type="term" value="P:apoptotic process"/>
    <property type="evidence" value="ECO:0000316"/>
    <property type="project" value="FlyBase"/>
</dbReference>
<dbReference type="GO" id="GO:0007298">
    <property type="term" value="P:border follicle cell migration"/>
    <property type="evidence" value="ECO:0000315"/>
    <property type="project" value="FlyBase"/>
</dbReference>
<dbReference type="GO" id="GO:0007349">
    <property type="term" value="P:cellularization"/>
    <property type="evidence" value="ECO:0000304"/>
    <property type="project" value="FlyBase"/>
</dbReference>
<dbReference type="GO" id="GO:0061640">
    <property type="term" value="P:cytoskeleton-dependent cytokinesis"/>
    <property type="evidence" value="ECO:0000318"/>
    <property type="project" value="GO_Central"/>
</dbReference>
<dbReference type="GO" id="GO:0007476">
    <property type="term" value="P:imaginal disc-derived wing morphogenesis"/>
    <property type="evidence" value="ECO:0000315"/>
    <property type="project" value="FlyBase"/>
</dbReference>
<dbReference type="GO" id="GO:0000281">
    <property type="term" value="P:mitotic cytokinesis"/>
    <property type="evidence" value="ECO:0000315"/>
    <property type="project" value="FlyBase"/>
</dbReference>
<dbReference type="GO" id="GO:0043065">
    <property type="term" value="P:positive regulation of apoptotic process"/>
    <property type="evidence" value="ECO:0000314"/>
    <property type="project" value="FlyBase"/>
</dbReference>
<dbReference type="GO" id="GO:0045572">
    <property type="term" value="P:positive regulation of imaginal disc growth"/>
    <property type="evidence" value="ECO:0000315"/>
    <property type="project" value="FlyBase"/>
</dbReference>
<dbReference type="GO" id="GO:0008104">
    <property type="term" value="P:protein localization"/>
    <property type="evidence" value="ECO:0000318"/>
    <property type="project" value="GO_Central"/>
</dbReference>
<dbReference type="GO" id="GO:0042060">
    <property type="term" value="P:wound healing"/>
    <property type="evidence" value="ECO:0000315"/>
    <property type="project" value="FlyBase"/>
</dbReference>
<dbReference type="CDD" id="cd01850">
    <property type="entry name" value="CDC_Septin"/>
    <property type="match status" value="1"/>
</dbReference>
<dbReference type="CDD" id="cd22265">
    <property type="entry name" value="UDM1_RNF168"/>
    <property type="match status" value="1"/>
</dbReference>
<dbReference type="FunFam" id="3.40.50.300:FF:000162">
    <property type="entry name" value="septin-7 isoform X1"/>
    <property type="match status" value="1"/>
</dbReference>
<dbReference type="Gene3D" id="3.40.50.300">
    <property type="entry name" value="P-loop containing nucleotide triphosphate hydrolases"/>
    <property type="match status" value="1"/>
</dbReference>
<dbReference type="InterPro" id="IPR030379">
    <property type="entry name" value="G_SEPTIN_dom"/>
</dbReference>
<dbReference type="InterPro" id="IPR027417">
    <property type="entry name" value="P-loop_NTPase"/>
</dbReference>
<dbReference type="InterPro" id="IPR016491">
    <property type="entry name" value="Septin"/>
</dbReference>
<dbReference type="PANTHER" id="PTHR18884">
    <property type="entry name" value="SEPTIN"/>
    <property type="match status" value="1"/>
</dbReference>
<dbReference type="Pfam" id="PF00735">
    <property type="entry name" value="Septin"/>
    <property type="match status" value="1"/>
</dbReference>
<dbReference type="SUPFAM" id="SSF52540">
    <property type="entry name" value="P-loop containing nucleoside triphosphate hydrolases"/>
    <property type="match status" value="1"/>
</dbReference>
<dbReference type="PROSITE" id="PS51719">
    <property type="entry name" value="G_SEPTIN"/>
    <property type="match status" value="1"/>
</dbReference>
<keyword id="KW-0131">Cell cycle</keyword>
<keyword id="KW-0132">Cell division</keyword>
<keyword id="KW-1003">Cell membrane</keyword>
<keyword id="KW-0175">Coiled coil</keyword>
<keyword id="KW-0963">Cytoplasm</keyword>
<keyword id="KW-0342">GTP-binding</keyword>
<keyword id="KW-0472">Membrane</keyword>
<keyword id="KW-0547">Nucleotide-binding</keyword>
<keyword id="KW-0597">Phosphoprotein</keyword>
<keyword id="KW-1185">Reference proteome</keyword>
<keyword id="KW-0832">Ubl conjugation</keyword>
<protein>
    <recommendedName>
        <fullName>Protein peanut</fullName>
    </recommendedName>
</protein>
<evidence type="ECO:0000250" key="1"/>
<evidence type="ECO:0000255" key="2"/>
<evidence type="ECO:0000255" key="3">
    <source>
        <dbReference type="PROSITE-ProRule" id="PRU01056"/>
    </source>
</evidence>
<evidence type="ECO:0000256" key="4">
    <source>
        <dbReference type="SAM" id="MobiDB-lite"/>
    </source>
</evidence>
<evidence type="ECO:0000269" key="5">
    <source>
    </source>
</evidence>
<evidence type="ECO:0000269" key="6">
    <source>
    </source>
</evidence>
<evidence type="ECO:0000269" key="7">
    <source>
    </source>
</evidence>
<evidence type="ECO:0000269" key="8">
    <source>
    </source>
</evidence>
<evidence type="ECO:0000269" key="9">
    <source>
    </source>
</evidence>
<evidence type="ECO:0000269" key="10">
    <source>
    </source>
</evidence>
<evidence type="ECO:0000305" key="11"/>
<name>PNUT_DROME</name>
<accession>P40797</accession>
<accession>Q0E9F5</accession>
<accession>Q9V385</accession>
<reference key="1">
    <citation type="journal article" date="1994" name="Cell">
        <title>The Drosophila peanut gene is required for cytokinesis and encodes a protein similar to yeast putative bud neck filament proteins.</title>
        <authorList>
            <person name="Neufeld T.P."/>
            <person name="Rubin G.M."/>
        </authorList>
    </citation>
    <scope>NUCLEOTIDE SEQUENCE [MRNA]</scope>
    <scope>FUNCTION</scope>
    <scope>SUBCELLULAR LOCATION</scope>
    <scope>DEVELOPMENTAL STAGE</scope>
</reference>
<reference key="2">
    <citation type="journal article" date="2000" name="Science">
        <title>The genome sequence of Drosophila melanogaster.</title>
        <authorList>
            <person name="Adams M.D."/>
            <person name="Celniker S.E."/>
            <person name="Holt R.A."/>
            <person name="Evans C.A."/>
            <person name="Gocayne J.D."/>
            <person name="Amanatides P.G."/>
            <person name="Scherer S.E."/>
            <person name="Li P.W."/>
            <person name="Hoskins R.A."/>
            <person name="Galle R.F."/>
            <person name="George R.A."/>
            <person name="Lewis S.E."/>
            <person name="Richards S."/>
            <person name="Ashburner M."/>
            <person name="Henderson S.N."/>
            <person name="Sutton G.G."/>
            <person name="Wortman J.R."/>
            <person name="Yandell M.D."/>
            <person name="Zhang Q."/>
            <person name="Chen L.X."/>
            <person name="Brandon R.C."/>
            <person name="Rogers Y.-H.C."/>
            <person name="Blazej R.G."/>
            <person name="Champe M."/>
            <person name="Pfeiffer B.D."/>
            <person name="Wan K.H."/>
            <person name="Doyle C."/>
            <person name="Baxter E.G."/>
            <person name="Helt G."/>
            <person name="Nelson C.R."/>
            <person name="Miklos G.L.G."/>
            <person name="Abril J.F."/>
            <person name="Agbayani A."/>
            <person name="An H.-J."/>
            <person name="Andrews-Pfannkoch C."/>
            <person name="Baldwin D."/>
            <person name="Ballew R.M."/>
            <person name="Basu A."/>
            <person name="Baxendale J."/>
            <person name="Bayraktaroglu L."/>
            <person name="Beasley E.M."/>
            <person name="Beeson K.Y."/>
            <person name="Benos P.V."/>
            <person name="Berman B.P."/>
            <person name="Bhandari D."/>
            <person name="Bolshakov S."/>
            <person name="Borkova D."/>
            <person name="Botchan M.R."/>
            <person name="Bouck J."/>
            <person name="Brokstein P."/>
            <person name="Brottier P."/>
            <person name="Burtis K.C."/>
            <person name="Busam D.A."/>
            <person name="Butler H."/>
            <person name="Cadieu E."/>
            <person name="Center A."/>
            <person name="Chandra I."/>
            <person name="Cherry J.M."/>
            <person name="Cawley S."/>
            <person name="Dahlke C."/>
            <person name="Davenport L.B."/>
            <person name="Davies P."/>
            <person name="de Pablos B."/>
            <person name="Delcher A."/>
            <person name="Deng Z."/>
            <person name="Mays A.D."/>
            <person name="Dew I."/>
            <person name="Dietz S.M."/>
            <person name="Dodson K."/>
            <person name="Doup L.E."/>
            <person name="Downes M."/>
            <person name="Dugan-Rocha S."/>
            <person name="Dunkov B.C."/>
            <person name="Dunn P."/>
            <person name="Durbin K.J."/>
            <person name="Evangelista C.C."/>
            <person name="Ferraz C."/>
            <person name="Ferriera S."/>
            <person name="Fleischmann W."/>
            <person name="Fosler C."/>
            <person name="Gabrielian A.E."/>
            <person name="Garg N.S."/>
            <person name="Gelbart W.M."/>
            <person name="Glasser K."/>
            <person name="Glodek A."/>
            <person name="Gong F."/>
            <person name="Gorrell J.H."/>
            <person name="Gu Z."/>
            <person name="Guan P."/>
            <person name="Harris M."/>
            <person name="Harris N.L."/>
            <person name="Harvey D.A."/>
            <person name="Heiman T.J."/>
            <person name="Hernandez J.R."/>
            <person name="Houck J."/>
            <person name="Hostin D."/>
            <person name="Houston K.A."/>
            <person name="Howland T.J."/>
            <person name="Wei M.-H."/>
            <person name="Ibegwam C."/>
            <person name="Jalali M."/>
            <person name="Kalush F."/>
            <person name="Karpen G.H."/>
            <person name="Ke Z."/>
            <person name="Kennison J.A."/>
            <person name="Ketchum K.A."/>
            <person name="Kimmel B.E."/>
            <person name="Kodira C.D."/>
            <person name="Kraft C.L."/>
            <person name="Kravitz S."/>
            <person name="Kulp D."/>
            <person name="Lai Z."/>
            <person name="Lasko P."/>
            <person name="Lei Y."/>
            <person name="Levitsky A.A."/>
            <person name="Li J.H."/>
            <person name="Li Z."/>
            <person name="Liang Y."/>
            <person name="Lin X."/>
            <person name="Liu X."/>
            <person name="Mattei B."/>
            <person name="McIntosh T.C."/>
            <person name="McLeod M.P."/>
            <person name="McPherson D."/>
            <person name="Merkulov G."/>
            <person name="Milshina N.V."/>
            <person name="Mobarry C."/>
            <person name="Morris J."/>
            <person name="Moshrefi A."/>
            <person name="Mount S.M."/>
            <person name="Moy M."/>
            <person name="Murphy B."/>
            <person name="Murphy L."/>
            <person name="Muzny D.M."/>
            <person name="Nelson D.L."/>
            <person name="Nelson D.R."/>
            <person name="Nelson K.A."/>
            <person name="Nixon K."/>
            <person name="Nusskern D.R."/>
            <person name="Pacleb J.M."/>
            <person name="Palazzolo M."/>
            <person name="Pittman G.S."/>
            <person name="Pan S."/>
            <person name="Pollard J."/>
            <person name="Puri V."/>
            <person name="Reese M.G."/>
            <person name="Reinert K."/>
            <person name="Remington K."/>
            <person name="Saunders R.D.C."/>
            <person name="Scheeler F."/>
            <person name="Shen H."/>
            <person name="Shue B.C."/>
            <person name="Siden-Kiamos I."/>
            <person name="Simpson M."/>
            <person name="Skupski M.P."/>
            <person name="Smith T.J."/>
            <person name="Spier E."/>
            <person name="Spradling A.C."/>
            <person name="Stapleton M."/>
            <person name="Strong R."/>
            <person name="Sun E."/>
            <person name="Svirskas R."/>
            <person name="Tector C."/>
            <person name="Turner R."/>
            <person name="Venter E."/>
            <person name="Wang A.H."/>
            <person name="Wang X."/>
            <person name="Wang Z.-Y."/>
            <person name="Wassarman D.A."/>
            <person name="Weinstock G.M."/>
            <person name="Weissenbach J."/>
            <person name="Williams S.M."/>
            <person name="Woodage T."/>
            <person name="Worley K.C."/>
            <person name="Wu D."/>
            <person name="Yang S."/>
            <person name="Yao Q.A."/>
            <person name="Ye J."/>
            <person name="Yeh R.-F."/>
            <person name="Zaveri J.S."/>
            <person name="Zhan M."/>
            <person name="Zhang G."/>
            <person name="Zhao Q."/>
            <person name="Zheng L."/>
            <person name="Zheng X.H."/>
            <person name="Zhong F.N."/>
            <person name="Zhong W."/>
            <person name="Zhou X."/>
            <person name="Zhu S.C."/>
            <person name="Zhu X."/>
            <person name="Smith H.O."/>
            <person name="Gibbs R.A."/>
            <person name="Myers E.W."/>
            <person name="Rubin G.M."/>
            <person name="Venter J.C."/>
        </authorList>
    </citation>
    <scope>NUCLEOTIDE SEQUENCE [LARGE SCALE GENOMIC DNA]</scope>
    <source>
        <strain>Berkeley</strain>
    </source>
</reference>
<reference key="3">
    <citation type="journal article" date="2002" name="Genome Biol.">
        <title>Annotation of the Drosophila melanogaster euchromatic genome: a systematic review.</title>
        <authorList>
            <person name="Misra S."/>
            <person name="Crosby M.A."/>
            <person name="Mungall C.J."/>
            <person name="Matthews B.B."/>
            <person name="Campbell K.S."/>
            <person name="Hradecky P."/>
            <person name="Huang Y."/>
            <person name="Kaminker J.S."/>
            <person name="Millburn G.H."/>
            <person name="Prochnik S.E."/>
            <person name="Smith C.D."/>
            <person name="Tupy J.L."/>
            <person name="Whitfield E.J."/>
            <person name="Bayraktaroglu L."/>
            <person name="Berman B.P."/>
            <person name="Bettencourt B.R."/>
            <person name="Celniker S.E."/>
            <person name="de Grey A.D.N.J."/>
            <person name="Drysdale R.A."/>
            <person name="Harris N.L."/>
            <person name="Richter J."/>
            <person name="Russo S."/>
            <person name="Schroeder A.J."/>
            <person name="Shu S.Q."/>
            <person name="Stapleton M."/>
            <person name="Yamada C."/>
            <person name="Ashburner M."/>
            <person name="Gelbart W.M."/>
            <person name="Rubin G.M."/>
            <person name="Lewis S.E."/>
        </authorList>
    </citation>
    <scope>GENOME REANNOTATION</scope>
    <source>
        <strain>Berkeley</strain>
    </source>
</reference>
<reference key="4">
    <citation type="journal article" date="2002" name="Genome Biol.">
        <title>A Drosophila full-length cDNA resource.</title>
        <authorList>
            <person name="Stapleton M."/>
            <person name="Carlson J.W."/>
            <person name="Brokstein P."/>
            <person name="Yu C."/>
            <person name="Champe M."/>
            <person name="George R.A."/>
            <person name="Guarin H."/>
            <person name="Kronmiller B."/>
            <person name="Pacleb J.M."/>
            <person name="Park S."/>
            <person name="Wan K.H."/>
            <person name="Rubin G.M."/>
            <person name="Celniker S.E."/>
        </authorList>
    </citation>
    <scope>NUCLEOTIDE SEQUENCE [LARGE SCALE MRNA]</scope>
    <source>
        <strain>Berkeley</strain>
        <tissue>Embryo</tissue>
    </source>
</reference>
<reference key="5">
    <citation type="journal article" date="1995" name="Mol. Biol. Cell">
        <title>Localization and possible functions of Drosophila septins.</title>
        <authorList>
            <person name="Fares H."/>
            <person name="Peifer M."/>
            <person name="Pringle J.R."/>
        </authorList>
    </citation>
    <scope>INTERACTION WITH SEPTIN1</scope>
    <scope>TISSUE SPECIFICITY</scope>
    <source>
        <tissue>Embryo</tissue>
    </source>
</reference>
<reference key="6">
    <citation type="journal article" date="2005" name="J. Neurobiol.">
        <title>D-Hillarin, a novel W180-domain protein, affects cytokinesis through interaction with the septin family member Pnut.</title>
        <authorList>
            <person name="Ji Y."/>
            <person name="Rath U."/>
            <person name="Girton J."/>
            <person name="Johansen K.M."/>
            <person name="Johansen J."/>
        </authorList>
    </citation>
    <scope>INTERACTION WITH HIL</scope>
    <scope>SUBCELLULAR LOCATION</scope>
</reference>
<reference key="7">
    <citation type="journal article" date="2007" name="Insect Biochem. Mol. Biol.">
        <title>Drosophila melanogaster Parkin ubiquitinates peanut and septin1 as an E3 ubiquitin-protein ligase.</title>
        <authorList>
            <person name="Bae Y.J."/>
            <person name="Kang S.J."/>
            <person name="Park K.S."/>
        </authorList>
    </citation>
    <scope>FUNCTION</scope>
    <scope>INTERACTION WITH PARK</scope>
    <scope>UBIQUITINATION</scope>
</reference>
<reference key="8">
    <citation type="journal article" date="2007" name="Mol. Biosyst.">
        <title>An integrated chemical, mass spectrometric and computational strategy for (quantitative) phosphoproteomics: application to Drosophila melanogaster Kc167 cells.</title>
        <authorList>
            <person name="Bodenmiller B."/>
            <person name="Mueller L.N."/>
            <person name="Pedrioli P.G.A."/>
            <person name="Pflieger D."/>
            <person name="Juenger M.A."/>
            <person name="Eng J.K."/>
            <person name="Aebersold R."/>
            <person name="Tao W.A."/>
        </authorList>
    </citation>
    <scope>PHOSPHORYLATION [LARGE SCALE ANALYSIS] AT SER-6 AND SER-13</scope>
    <scope>IDENTIFICATION BY MASS SPECTROMETRY</scope>
</reference>
<reference key="9">
    <citation type="journal article" date="2008" name="J. Proteome Res.">
        <title>Phosphoproteome analysis of Drosophila melanogaster embryos.</title>
        <authorList>
            <person name="Zhai B."/>
            <person name="Villen J."/>
            <person name="Beausoleil S.A."/>
            <person name="Mintseris J."/>
            <person name="Gygi S.P."/>
        </authorList>
    </citation>
    <scope>PHOSPHORYLATION [LARGE SCALE ANALYSIS] AT SER-517</scope>
    <scope>IDENTIFICATION BY MASS SPECTROMETRY</scope>
    <source>
        <tissue>Embryo</tissue>
    </source>
</reference>